<reference key="1">
    <citation type="journal article" date="2015" name="Biotechnol. Biofuels">
        <title>Genetic basis of the highly efficient yeast Kluyveromyces marxianus: complete genome sequence and transcriptome analyses.</title>
        <authorList>
            <person name="Lertwattanasakul N."/>
            <person name="Kosaka T."/>
            <person name="Hosoyama A."/>
            <person name="Suzuki Y."/>
            <person name="Rodrussamee N."/>
            <person name="Matsutani M."/>
            <person name="Murata M."/>
            <person name="Fujimoto N."/>
            <person name="Suprayogi X."/>
            <person name="Tsuchikane K."/>
            <person name="Limtong S."/>
            <person name="Fujita N."/>
            <person name="Yamada M."/>
        </authorList>
    </citation>
    <scope>NUCLEOTIDE SEQUENCE [LARGE SCALE GENOMIC DNA]</scope>
    <source>
        <strain>DMKU3-1042 / BCC 29191 / NBRC 104275</strain>
    </source>
</reference>
<reference key="2">
    <citation type="journal article" date="2017" name="Metab. Eng.">
        <title>Ethyl acetate production by the elusive alcohol acetyltransferase from yeast.</title>
        <authorList>
            <person name="Kruis A.J."/>
            <person name="Levisson M."/>
            <person name="Mars A.E."/>
            <person name="van der Ploeg M."/>
            <person name="Garces Daza F."/>
            <person name="Ellena V."/>
            <person name="Kengen S.W.M."/>
            <person name="van der Oost J."/>
            <person name="Weusthuis R.A."/>
        </authorList>
    </citation>
    <scope>FUNCTION</scope>
    <scope>CATALYTIC ACTIVITY</scope>
    <source>
        <strain>DSM 5422</strain>
    </source>
</reference>
<name>EAT1_KLUMD</name>
<feature type="transit peptide" description="Mitochondrion" evidence="2">
    <location>
        <begin position="1"/>
        <end position="19"/>
    </location>
</feature>
<feature type="chain" id="PRO_0000446181" description="Ethanol acetyltransferase 1">
    <location>
        <begin position="20"/>
        <end position="363"/>
    </location>
</feature>
<feature type="domain" description="AB hydrolase-1" evidence="2">
    <location>
        <begin position="65"/>
        <end position="164"/>
    </location>
</feature>
<feature type="active site" description="Charge relay system" evidence="1">
    <location>
        <position position="138"/>
    </location>
</feature>
<feature type="active site" description="Charge relay system" evidence="1">
    <location>
        <position position="162"/>
    </location>
</feature>
<feature type="active site" description="Charge relay system" evidence="1">
    <location>
        <position position="313"/>
    </location>
</feature>
<protein>
    <recommendedName>
        <fullName>Ethanol acetyltransferase 1</fullName>
        <ecNumber>2.3.1.268</ecNumber>
    </recommendedName>
    <alternativeName>
        <fullName>Acetyl-CoA hydrolase</fullName>
        <ecNumber>3.1.2.1</ecNumber>
    </alternativeName>
    <alternativeName>
        <fullName>Acetyl-CoA thioesterase</fullName>
    </alternativeName>
    <alternativeName>
        <fullName>Alcohol acetyltransferase</fullName>
        <shortName>AAT</shortName>
    </alternativeName>
    <alternativeName>
        <fullName>Ethyl acetate esterase</fullName>
        <ecNumber>3.1.1.-</ecNumber>
    </alternativeName>
</protein>
<proteinExistence type="evidence at protein level"/>
<sequence length="363" mass="41758">MLLAYTVRPSNWSFTRRAYSATARAFNQQKGLLPLPIKETVDMAYDLHLPERSVIGKMPYHSPEPIIFYHGLLGSKRNYRHDCKKLATALQTPVYTVDIRNHGSSEHALPFDYNTLVNDLVHFAETHSLGKVNLVGYSLGAKVAMLACLKHPERFSAACIIDNSPEEQPHIKPLLTALVKSCVKLLDHHNVRADDKLWRHKASEALKKYIPDAGIRYYLLSNIINNPRVVEYRSPVINYDDGMLHFKNPVRHMMDFVTKEVAAWPTQELEGKQFLGPVNFIKATRSDFINPKSLQAINQYFPYHNIDEINATHFILNERPQEYLRAVTDFFKVTRYQLEKKREQDLAKIDQLNASESLKSARD</sequence>
<comment type="function">
    <text evidence="1 3">Alcohol acetyltransferase that catalyzes the synthesis of ethyl acetate from ethanol and acetyl-CoA (PubMed:28356220). Can also function as a thioesterase by hydrolyzing acetyl-CoA in the absence of ethanol, as well as esterase hydrolyzing ethyl acetate (By similarity).</text>
</comment>
<comment type="catalytic activity">
    <reaction evidence="3">
        <text>ethanol + acetyl-CoA = ethyl acetate + CoA</text>
        <dbReference type="Rhea" id="RHEA:55972"/>
        <dbReference type="ChEBI" id="CHEBI:16236"/>
        <dbReference type="ChEBI" id="CHEBI:27750"/>
        <dbReference type="ChEBI" id="CHEBI:57287"/>
        <dbReference type="ChEBI" id="CHEBI:57288"/>
        <dbReference type="EC" id="2.3.1.268"/>
    </reaction>
</comment>
<comment type="catalytic activity">
    <reaction evidence="1">
        <text>acetyl-CoA + H2O = acetate + CoA + H(+)</text>
        <dbReference type="Rhea" id="RHEA:20289"/>
        <dbReference type="ChEBI" id="CHEBI:15377"/>
        <dbReference type="ChEBI" id="CHEBI:15378"/>
        <dbReference type="ChEBI" id="CHEBI:30089"/>
        <dbReference type="ChEBI" id="CHEBI:57287"/>
        <dbReference type="ChEBI" id="CHEBI:57288"/>
        <dbReference type="EC" id="3.1.2.1"/>
    </reaction>
</comment>
<comment type="catalytic activity">
    <reaction evidence="1">
        <text>ethyl acetate + H2O = ethanol + acetate + H(+)</text>
        <dbReference type="Rhea" id="RHEA:58148"/>
        <dbReference type="ChEBI" id="CHEBI:15377"/>
        <dbReference type="ChEBI" id="CHEBI:15378"/>
        <dbReference type="ChEBI" id="CHEBI:16236"/>
        <dbReference type="ChEBI" id="CHEBI:27750"/>
        <dbReference type="ChEBI" id="CHEBI:30089"/>
    </reaction>
</comment>
<comment type="subcellular location">
    <subcellularLocation>
        <location evidence="1">Mitochondrion</location>
    </subcellularLocation>
</comment>
<comment type="similarity">
    <text evidence="4">Belongs to the AB hydrolase superfamily.</text>
</comment>
<organism>
    <name type="scientific">Kluyveromyces marxianus (strain DMKU3-1042 / BCC 29191 / NBRC 104275)</name>
    <name type="common">Yeast</name>
    <name type="synonym">Candida kefyr</name>
    <dbReference type="NCBI Taxonomy" id="1003335"/>
    <lineage>
        <taxon>Eukaryota</taxon>
        <taxon>Fungi</taxon>
        <taxon>Dikarya</taxon>
        <taxon>Ascomycota</taxon>
        <taxon>Saccharomycotina</taxon>
        <taxon>Saccharomycetes</taxon>
        <taxon>Saccharomycetales</taxon>
        <taxon>Saccharomycetaceae</taxon>
        <taxon>Kluyveromyces</taxon>
    </lineage>
</organism>
<gene>
    <name type="primary">EAT1</name>
    <name type="ORF">KLMA_10805</name>
</gene>
<keyword id="KW-0378">Hydrolase</keyword>
<keyword id="KW-0496">Mitochondrion</keyword>
<keyword id="KW-0808">Transferase</keyword>
<keyword id="KW-0809">Transit peptide</keyword>
<dbReference type="EC" id="2.3.1.268"/>
<dbReference type="EC" id="3.1.2.1"/>
<dbReference type="EC" id="3.1.1.-"/>
<dbReference type="EMBL" id="AP012213">
    <property type="protein sequence ID" value="BAO38427.1"/>
    <property type="molecule type" value="Genomic_DNA"/>
</dbReference>
<dbReference type="SMR" id="W0T4A7"/>
<dbReference type="ESTHER" id="kluma-w0t4a7">
    <property type="family name" value="ABHD11-Acetyl_transferase"/>
</dbReference>
<dbReference type="VEuPathDB" id="FungiDB:KLMA_10805"/>
<dbReference type="OrthoDB" id="8119704at2759"/>
<dbReference type="BRENDA" id="2.3.1.268">
    <property type="organism ID" value="1120"/>
</dbReference>
<dbReference type="Proteomes" id="UP000065495">
    <property type="component" value="Chromosome 1"/>
</dbReference>
<dbReference type="GO" id="GO:0005739">
    <property type="term" value="C:mitochondrion"/>
    <property type="evidence" value="ECO:0007669"/>
    <property type="project" value="UniProtKB-SubCell"/>
</dbReference>
<dbReference type="GO" id="GO:0003986">
    <property type="term" value="F:acetyl-CoA hydrolase activity"/>
    <property type="evidence" value="ECO:0007669"/>
    <property type="project" value="UniProtKB-EC"/>
</dbReference>
<dbReference type="GO" id="GO:0052689">
    <property type="term" value="F:carboxylic ester hydrolase activity"/>
    <property type="evidence" value="ECO:0007669"/>
    <property type="project" value="TreeGrafter"/>
</dbReference>
<dbReference type="GO" id="GO:0016740">
    <property type="term" value="F:transferase activity"/>
    <property type="evidence" value="ECO:0007669"/>
    <property type="project" value="UniProtKB-KW"/>
</dbReference>
<dbReference type="Gene3D" id="3.40.50.1820">
    <property type="entry name" value="alpha/beta hydrolase"/>
    <property type="match status" value="1"/>
</dbReference>
<dbReference type="InterPro" id="IPR000073">
    <property type="entry name" value="AB_hydrolase_1"/>
</dbReference>
<dbReference type="InterPro" id="IPR029058">
    <property type="entry name" value="AB_hydrolase_fold"/>
</dbReference>
<dbReference type="PANTHER" id="PTHR46118">
    <property type="entry name" value="PROTEIN ABHD11"/>
    <property type="match status" value="1"/>
</dbReference>
<dbReference type="PANTHER" id="PTHR46118:SF4">
    <property type="entry name" value="PROTEIN ABHD11"/>
    <property type="match status" value="1"/>
</dbReference>
<dbReference type="Pfam" id="PF00561">
    <property type="entry name" value="Abhydrolase_1"/>
    <property type="match status" value="1"/>
</dbReference>
<dbReference type="SUPFAM" id="SSF53474">
    <property type="entry name" value="alpha/beta-Hydrolases"/>
    <property type="match status" value="1"/>
</dbReference>
<evidence type="ECO:0000250" key="1">
    <source>
        <dbReference type="UniProtKB" id="A0A1E3P8S6"/>
    </source>
</evidence>
<evidence type="ECO:0000255" key="2"/>
<evidence type="ECO:0000269" key="3">
    <source>
    </source>
</evidence>
<evidence type="ECO:0000305" key="4"/>
<accession>W0T4A7</accession>